<accession>B1LHV9</accession>
<reference key="1">
    <citation type="journal article" date="2008" name="J. Bacteriol.">
        <title>Insights into the environmental resistance gene pool from the genome sequence of the multidrug-resistant environmental isolate Escherichia coli SMS-3-5.</title>
        <authorList>
            <person name="Fricke W.F."/>
            <person name="Wright M.S."/>
            <person name="Lindell A.H."/>
            <person name="Harkins D.M."/>
            <person name="Baker-Austin C."/>
            <person name="Ravel J."/>
            <person name="Stepanauskas R."/>
        </authorList>
    </citation>
    <scope>NUCLEOTIDE SEQUENCE [LARGE SCALE GENOMIC DNA]</scope>
    <source>
        <strain>SMS-3-5 / SECEC</strain>
    </source>
</reference>
<protein>
    <recommendedName>
        <fullName>Common pilus major fimbrillin subunit EcpA</fullName>
    </recommendedName>
    <alternativeName>
        <fullName>MatB fimbrillin</fullName>
    </alternativeName>
</protein>
<keyword id="KW-0281">Fimbrium</keyword>
<keyword id="KW-0732">Signal</keyword>
<proteinExistence type="inferred from homology"/>
<organism>
    <name type="scientific">Escherichia coli (strain SMS-3-5 / SECEC)</name>
    <dbReference type="NCBI Taxonomy" id="439855"/>
    <lineage>
        <taxon>Bacteria</taxon>
        <taxon>Pseudomonadati</taxon>
        <taxon>Pseudomonadota</taxon>
        <taxon>Gammaproteobacteria</taxon>
        <taxon>Enterobacterales</taxon>
        <taxon>Enterobacteriaceae</taxon>
        <taxon>Escherichia</taxon>
    </lineage>
</organism>
<comment type="function">
    <text evidence="1">Part of the ecpRABCDE operon, which encodes the E.coli common pilus (ECP). ECP is found in both commensal and pathogenic strains and plays a dual role in early-stage biofilm development and host cell recognition. Major subunit of the fimbria (By similarity).</text>
</comment>
<comment type="subunit">
    <text evidence="1">Self-associates. Forms filaments. Interacts with EcpD (By similarity).</text>
</comment>
<comment type="subcellular location">
    <subcellularLocation>
        <location evidence="1">Fimbrium</location>
    </subcellularLocation>
</comment>
<comment type="induction">
    <text evidence="1">Negatively regulated by H-NS. Positively regulated by IHF and EcpR (By similarity).</text>
</comment>
<comment type="similarity">
    <text evidence="3">Belongs to the EcpA/MatB fimbrillin family.</text>
</comment>
<dbReference type="EMBL" id="CP000970">
    <property type="protein sequence ID" value="ACB16100.1"/>
    <property type="molecule type" value="Genomic_DNA"/>
</dbReference>
<dbReference type="RefSeq" id="WP_000730983.1">
    <property type="nucleotide sequence ID" value="NC_010498.1"/>
</dbReference>
<dbReference type="SMR" id="B1LHV9"/>
<dbReference type="KEGG" id="ecm:EcSMS35_0319"/>
<dbReference type="HOGENOM" id="CLU_120328_0_0_6"/>
<dbReference type="Proteomes" id="UP000007011">
    <property type="component" value="Chromosome"/>
</dbReference>
<dbReference type="GO" id="GO:0009289">
    <property type="term" value="C:pilus"/>
    <property type="evidence" value="ECO:0007669"/>
    <property type="project" value="UniProtKB-SubCell"/>
</dbReference>
<dbReference type="Gene3D" id="2.60.40.3290">
    <property type="entry name" value="Fimbrial protein EcpA"/>
    <property type="match status" value="1"/>
</dbReference>
<dbReference type="InterPro" id="IPR016514">
    <property type="entry name" value="EcpA"/>
</dbReference>
<dbReference type="InterPro" id="IPR038478">
    <property type="entry name" value="Fimbrillin_EcpA_sf"/>
</dbReference>
<dbReference type="Pfam" id="PF16449">
    <property type="entry name" value="MatB"/>
    <property type="match status" value="1"/>
</dbReference>
<dbReference type="PIRSF" id="PIRSF007320">
    <property type="entry name" value="Fimbrillin_MatB"/>
    <property type="match status" value="1"/>
</dbReference>
<gene>
    <name type="primary">ecpA</name>
    <name type="synonym">matB</name>
    <name type="ordered locus">EcSMS35_0319</name>
</gene>
<feature type="signal peptide" evidence="2">
    <location>
        <begin position="1"/>
        <end position="22"/>
    </location>
</feature>
<feature type="chain" id="PRO_0000367924" description="Common pilus major fimbrillin subunit EcpA">
    <location>
        <begin position="23"/>
        <end position="195"/>
    </location>
</feature>
<sequence>MKKKVLAIALVTVFTGTGVAQAADVTAQAVATWSATAKKDTTSKLVVTPLGSLAFQYAEGIKGFNSQKGLFDVAIEGDSTATAFKLTSRLITNTLTQLDTSGSTLNVGVDYNGAAVEKTGDTVMIDTANGVLGGNLSPLANGYNVSNRTTAQDGFTFSIISGTTNGTTAVTDYSTLPEGIWSGDVSVQFDATWTS</sequence>
<evidence type="ECO:0000250" key="1"/>
<evidence type="ECO:0000255" key="2"/>
<evidence type="ECO:0000305" key="3"/>
<name>ECPA_ECOSM</name>